<evidence type="ECO:0000255" key="1">
    <source>
        <dbReference type="PROSITE-ProRule" id="PRU01191"/>
    </source>
</evidence>
<evidence type="ECO:0000256" key="2">
    <source>
        <dbReference type="SAM" id="MobiDB-lite"/>
    </source>
</evidence>
<evidence type="ECO:0000269" key="3">
    <source>
    </source>
</evidence>
<evidence type="ECO:0000303" key="4">
    <source>
    </source>
</evidence>
<evidence type="ECO:0000305" key="5"/>
<evidence type="ECO:0000312" key="6">
    <source>
        <dbReference type="EMBL" id="BAD35485.1"/>
    </source>
</evidence>
<evidence type="ECO:0000312" key="7">
    <source>
        <dbReference type="EMBL" id="BAS98577.1"/>
    </source>
</evidence>
<accession>Q84MM9</accession>
<accession>A0A0N7KME3</accession>
<accession>Q69XH2</accession>
<gene>
    <name evidence="4" type="primary">MOC1</name>
    <name evidence="7" type="ordered locus">Os06g0610300</name>
    <name evidence="5" type="ordered locus">LOC_Os06g40780</name>
    <name evidence="6" type="ORF">P0490F09.19</name>
</gene>
<comment type="function">
    <text evidence="3">Putative transcription regulator that controls rice tillering by initiating axillary buds and promoting their outgrowth. Rice tiller is a specialized grain-bearing branch that is formed on the unelongated basal internode and grows independently of the mother stem (culm) by means of its own adventitious roots.</text>
</comment>
<comment type="subcellular location">
    <subcellularLocation>
        <location evidence="3">Nucleus</location>
    </subcellularLocation>
</comment>
<comment type="tissue specificity">
    <text evidence="3">Expressed in a small number of epidermal or subepidermal cells at the leaf axils, in axillary meristems and the entire tiller buds. Undetected in the shoot apical meristem.</text>
</comment>
<comment type="domain">
    <text evidence="5">The C-terminal part of the protein is important for tillering. Mutant moc1, in which the last 124 amino acids are missing, is mono culm.</text>
</comment>
<comment type="similarity">
    <text evidence="5">Belongs to the GRAS family.</text>
</comment>
<comment type="sequence caution" evidence="5">
    <conflict type="erroneous gene model prediction">
        <sequence resource="EMBL-CDS" id="BAD35485"/>
    </conflict>
</comment>
<comment type="sequence caution" evidence="5">
    <conflict type="erroneous gene model prediction">
        <sequence resource="EMBL-CDS" id="BAS98577"/>
    </conflict>
</comment>
<organism>
    <name type="scientific">Oryza sativa subsp. japonica</name>
    <name type="common">Rice</name>
    <dbReference type="NCBI Taxonomy" id="39947"/>
    <lineage>
        <taxon>Eukaryota</taxon>
        <taxon>Viridiplantae</taxon>
        <taxon>Streptophyta</taxon>
        <taxon>Embryophyta</taxon>
        <taxon>Tracheophyta</taxon>
        <taxon>Spermatophyta</taxon>
        <taxon>Magnoliopsida</taxon>
        <taxon>Liliopsida</taxon>
        <taxon>Poales</taxon>
        <taxon>Poaceae</taxon>
        <taxon>BOP clade</taxon>
        <taxon>Oryzoideae</taxon>
        <taxon>Oryzeae</taxon>
        <taxon>Oryzinae</taxon>
        <taxon>Oryza</taxon>
        <taxon>Oryza sativa</taxon>
    </lineage>
</organism>
<proteinExistence type="evidence at transcript level"/>
<sequence>MLRSLHSSSSSDTDNNSGGCKNNGGGGGEAAAAVEGGGDQRAVAAAAPSTRDLLLACADLLQRGDLPAARRAAEIVLAAAASPRGDAADRLAYHFARALALRVDAKAGHGHVVVGGGAARPASSGAYLAFNQIAPFLRFAHLTANQAILEAVDGARRVHILDLDAVHGVQWPPLLQAIAERADPALGPPEVRVTGAGADRDTLLRTGNRLRAFARSIHLPFHFTPLLLSCATTAPHHVAGTSTGAAAAASTAAAATGLEFHPDETLAVNCVMFLHNLAGHDELAAFLKWVKAMSPAVVTIAEREAGGGGGGGDHIDDLPRRVGVAMDHYSAVFEALEATVPPGSRERLAVEQEVLGREIEAAVGPSGGRWWRGIERWGGAARAAGFAARPLSAFAVSQARLLLRLHYPSEGYLVQEARGACFLGWQTRPLLSVSAWQPSSS</sequence>
<name>MOC_ORYSJ</name>
<feature type="chain" id="PRO_0000132231" description="Protein MONOCULM 1">
    <location>
        <begin position="1"/>
        <end position="441"/>
    </location>
</feature>
<feature type="domain" description="GRAS" evidence="1">
    <location>
        <begin position="41"/>
        <end position="437"/>
    </location>
</feature>
<feature type="region of interest" description="Disordered" evidence="2">
    <location>
        <begin position="1"/>
        <end position="33"/>
    </location>
</feature>
<feature type="region of interest" description="Leucine repeat I (LRI)" evidence="1">
    <location>
        <begin position="48"/>
        <end position="126"/>
    </location>
</feature>
<feature type="region of interest" description="VHIID" evidence="1">
    <location>
        <begin position="127"/>
        <end position="195"/>
    </location>
</feature>
<feature type="region of interest" description="Leucine repeat II (LRII)" evidence="1">
    <location>
        <begin position="205"/>
        <end position="256"/>
    </location>
</feature>
<feature type="region of interest" description="PFYRE" evidence="1">
    <location>
        <begin position="266"/>
        <end position="361"/>
    </location>
</feature>
<feature type="region of interest" description="SAW" evidence="1">
    <location>
        <begin position="364"/>
        <end position="437"/>
    </location>
</feature>
<feature type="short sequence motif" description="VHIID" evidence="1">
    <location>
        <begin position="158"/>
        <end position="162"/>
    </location>
</feature>
<feature type="compositionally biased region" description="Low complexity" evidence="2">
    <location>
        <begin position="7"/>
        <end position="20"/>
    </location>
</feature>
<feature type="compositionally biased region" description="Gly residues" evidence="2">
    <location>
        <begin position="21"/>
        <end position="33"/>
    </location>
</feature>
<keyword id="KW-0217">Developmental protein</keyword>
<keyword id="KW-0539">Nucleus</keyword>
<keyword id="KW-1185">Reference proteome</keyword>
<keyword id="KW-0804">Transcription</keyword>
<keyword id="KW-0805">Transcription regulation</keyword>
<reference key="1">
    <citation type="journal article" date="2003" name="Nature">
        <title>Control of tillering in rice.</title>
        <authorList>
            <person name="Li X."/>
            <person name="Qian Q."/>
            <person name="Fu Z."/>
            <person name="Wang Y."/>
            <person name="Xiong G."/>
            <person name="Zeng D."/>
            <person name="Wang X."/>
            <person name="Liu X."/>
            <person name="Teng S."/>
            <person name="Hiroshi F."/>
            <person name="Yuan M."/>
            <person name="Luo D."/>
            <person name="Han B."/>
            <person name="Li J."/>
        </authorList>
    </citation>
    <scope>NUCLEOTIDE SEQUENCE [GENOMIC DNA]</scope>
    <scope>FUNCTION</scope>
    <scope>TISSUE SPECIFICITY</scope>
    <scope>SUBCELLULAR LOCATION</scope>
    <scope>MUTANT MOC1</scope>
    <source>
        <strain>cv. H89025</strain>
    </source>
</reference>
<reference key="2">
    <citation type="journal article" date="2005" name="Nature">
        <title>The map-based sequence of the rice genome.</title>
        <authorList>
            <consortium name="International rice genome sequencing project (IRGSP)"/>
        </authorList>
    </citation>
    <scope>NUCLEOTIDE SEQUENCE [LARGE SCALE GENOMIC DNA]</scope>
    <source>
        <strain>cv. Nipponbare</strain>
    </source>
</reference>
<reference key="3">
    <citation type="journal article" date="2013" name="Rice">
        <title>Improvement of the Oryza sativa Nipponbare reference genome using next generation sequence and optical map data.</title>
        <authorList>
            <person name="Kawahara Y."/>
            <person name="de la Bastide M."/>
            <person name="Hamilton J.P."/>
            <person name="Kanamori H."/>
            <person name="McCombie W.R."/>
            <person name="Ouyang S."/>
            <person name="Schwartz D.C."/>
            <person name="Tanaka T."/>
            <person name="Wu J."/>
            <person name="Zhou S."/>
            <person name="Childs K.L."/>
            <person name="Davidson R.M."/>
            <person name="Lin H."/>
            <person name="Quesada-Ocampo L."/>
            <person name="Vaillancourt B."/>
            <person name="Sakai H."/>
            <person name="Lee S.S."/>
            <person name="Kim J."/>
            <person name="Numa H."/>
            <person name="Itoh T."/>
            <person name="Buell C.R."/>
            <person name="Matsumoto T."/>
        </authorList>
    </citation>
    <scope>GENOME REANNOTATION</scope>
    <source>
        <strain>cv. Nipponbare</strain>
    </source>
</reference>
<dbReference type="EMBL" id="AY242058">
    <property type="protein sequence ID" value="AAP13049.1"/>
    <property type="molecule type" value="Genomic_DNA"/>
</dbReference>
<dbReference type="EMBL" id="AP003616">
    <property type="protein sequence ID" value="BAD35485.1"/>
    <property type="status" value="ALT_SEQ"/>
    <property type="molecule type" value="Genomic_DNA"/>
</dbReference>
<dbReference type="EMBL" id="AP014962">
    <property type="protein sequence ID" value="BAS98577.1"/>
    <property type="status" value="ALT_SEQ"/>
    <property type="molecule type" value="Genomic_DNA"/>
</dbReference>
<dbReference type="SMR" id="Q84MM9"/>
<dbReference type="FunCoup" id="Q84MM9">
    <property type="interactions" value="2213"/>
</dbReference>
<dbReference type="STRING" id="39947.Q84MM9"/>
<dbReference type="PaxDb" id="39947-Q84MM9"/>
<dbReference type="EnsemblPlants" id="Os06t0610350-01">
    <property type="protein sequence ID" value="Os06t0610350-01"/>
    <property type="gene ID" value="Os06g0610350"/>
</dbReference>
<dbReference type="GeneID" id="107278653"/>
<dbReference type="Gramene" id="Os06t0610350-01">
    <property type="protein sequence ID" value="Os06t0610350-01"/>
    <property type="gene ID" value="Os06g0610350"/>
</dbReference>
<dbReference type="KEGG" id="osa:107278653"/>
<dbReference type="eggNOG" id="ENOG502QTC4">
    <property type="taxonomic scope" value="Eukaryota"/>
</dbReference>
<dbReference type="InParanoid" id="Q84MM9"/>
<dbReference type="OrthoDB" id="1882904at2759"/>
<dbReference type="Proteomes" id="UP000000763">
    <property type="component" value="Chromosome 6"/>
</dbReference>
<dbReference type="Proteomes" id="UP000059680">
    <property type="component" value="Chromosome 6"/>
</dbReference>
<dbReference type="GO" id="GO:0005634">
    <property type="term" value="C:nucleus"/>
    <property type="evidence" value="ECO:0000314"/>
    <property type="project" value="Gramene"/>
</dbReference>
<dbReference type="GO" id="GO:0003700">
    <property type="term" value="F:DNA-binding transcription factor activity"/>
    <property type="evidence" value="ECO:0000318"/>
    <property type="project" value="GO_Central"/>
</dbReference>
<dbReference type="GO" id="GO:0043565">
    <property type="term" value="F:sequence-specific DNA binding"/>
    <property type="evidence" value="ECO:0000318"/>
    <property type="project" value="GO_Central"/>
</dbReference>
<dbReference type="GO" id="GO:0010014">
    <property type="term" value="P:meristem initiation"/>
    <property type="evidence" value="ECO:0000315"/>
    <property type="project" value="Gramene"/>
</dbReference>
<dbReference type="GO" id="GO:0006355">
    <property type="term" value="P:regulation of DNA-templated transcription"/>
    <property type="evidence" value="ECO:0000318"/>
    <property type="project" value="GO_Central"/>
</dbReference>
<dbReference type="InterPro" id="IPR005202">
    <property type="entry name" value="TF_GRAS"/>
</dbReference>
<dbReference type="PANTHER" id="PTHR31636">
    <property type="entry name" value="OSJNBA0084A10.13 PROTEIN-RELATED"/>
    <property type="match status" value="1"/>
</dbReference>
<dbReference type="Pfam" id="PF03514">
    <property type="entry name" value="GRAS"/>
    <property type="match status" value="1"/>
</dbReference>
<dbReference type="PROSITE" id="PS50985">
    <property type="entry name" value="GRAS"/>
    <property type="match status" value="1"/>
</dbReference>
<protein>
    <recommendedName>
        <fullName evidence="4">Protein MONOCULM 1</fullName>
    </recommendedName>
</protein>